<accession>B6I7S9</accession>
<evidence type="ECO:0000255" key="1">
    <source>
        <dbReference type="HAMAP-Rule" id="MF_01694"/>
    </source>
</evidence>
<evidence type="ECO:0000255" key="2">
    <source>
        <dbReference type="PROSITE-ProRule" id="PRU01266"/>
    </source>
</evidence>
<reference key="1">
    <citation type="journal article" date="2008" name="DNA Res.">
        <title>Complete genome sequence and comparative analysis of the wild-type commensal Escherichia coli strain SE11 isolated from a healthy adult.</title>
        <authorList>
            <person name="Oshima K."/>
            <person name="Toh H."/>
            <person name="Ogura Y."/>
            <person name="Sasamoto H."/>
            <person name="Morita H."/>
            <person name="Park S.-H."/>
            <person name="Ooka T."/>
            <person name="Iyoda S."/>
            <person name="Taylor T.D."/>
            <person name="Hayashi T."/>
            <person name="Itoh K."/>
            <person name="Hattori M."/>
        </authorList>
    </citation>
    <scope>NUCLEOTIDE SEQUENCE [LARGE SCALE GENOMIC DNA]</scope>
    <source>
        <strain>SE11</strain>
    </source>
</reference>
<feature type="chain" id="PRO_0000381371" description="Biotin synthase">
    <location>
        <begin position="1"/>
        <end position="346"/>
    </location>
</feature>
<feature type="domain" description="Radical SAM core" evidence="2">
    <location>
        <begin position="38"/>
        <end position="256"/>
    </location>
</feature>
<feature type="binding site" evidence="1">
    <location>
        <position position="53"/>
    </location>
    <ligand>
        <name>[4Fe-4S] cluster</name>
        <dbReference type="ChEBI" id="CHEBI:49883"/>
        <note>4Fe-4S-S-AdoMet</note>
    </ligand>
</feature>
<feature type="binding site" evidence="1">
    <location>
        <position position="57"/>
    </location>
    <ligand>
        <name>[4Fe-4S] cluster</name>
        <dbReference type="ChEBI" id="CHEBI:49883"/>
        <note>4Fe-4S-S-AdoMet</note>
    </ligand>
</feature>
<feature type="binding site" evidence="1">
    <location>
        <position position="60"/>
    </location>
    <ligand>
        <name>[4Fe-4S] cluster</name>
        <dbReference type="ChEBI" id="CHEBI:49883"/>
        <note>4Fe-4S-S-AdoMet</note>
    </ligand>
</feature>
<feature type="binding site" evidence="1">
    <location>
        <position position="97"/>
    </location>
    <ligand>
        <name>[2Fe-2S] cluster</name>
        <dbReference type="ChEBI" id="CHEBI:190135"/>
    </ligand>
</feature>
<feature type="binding site" evidence="1">
    <location>
        <position position="128"/>
    </location>
    <ligand>
        <name>[2Fe-2S] cluster</name>
        <dbReference type="ChEBI" id="CHEBI:190135"/>
    </ligand>
</feature>
<feature type="binding site" evidence="1">
    <location>
        <position position="188"/>
    </location>
    <ligand>
        <name>[2Fe-2S] cluster</name>
        <dbReference type="ChEBI" id="CHEBI:190135"/>
    </ligand>
</feature>
<feature type="binding site" evidence="1">
    <location>
        <position position="260"/>
    </location>
    <ligand>
        <name>[2Fe-2S] cluster</name>
        <dbReference type="ChEBI" id="CHEBI:190135"/>
    </ligand>
</feature>
<dbReference type="EC" id="2.8.1.6" evidence="1"/>
<dbReference type="EMBL" id="AP009240">
    <property type="protein sequence ID" value="BAG76352.1"/>
    <property type="molecule type" value="Genomic_DNA"/>
</dbReference>
<dbReference type="RefSeq" id="WP_000951209.1">
    <property type="nucleotide sequence ID" value="NC_011415.1"/>
</dbReference>
<dbReference type="SMR" id="B6I7S9"/>
<dbReference type="KEGG" id="ecy:ECSE_0828"/>
<dbReference type="HOGENOM" id="CLU_033172_1_2_6"/>
<dbReference type="UniPathway" id="UPA00078">
    <property type="reaction ID" value="UER00162"/>
</dbReference>
<dbReference type="Proteomes" id="UP000008199">
    <property type="component" value="Chromosome"/>
</dbReference>
<dbReference type="GO" id="GO:0051537">
    <property type="term" value="F:2 iron, 2 sulfur cluster binding"/>
    <property type="evidence" value="ECO:0007669"/>
    <property type="project" value="UniProtKB-KW"/>
</dbReference>
<dbReference type="GO" id="GO:0051539">
    <property type="term" value="F:4 iron, 4 sulfur cluster binding"/>
    <property type="evidence" value="ECO:0007669"/>
    <property type="project" value="UniProtKB-KW"/>
</dbReference>
<dbReference type="GO" id="GO:0004076">
    <property type="term" value="F:biotin synthase activity"/>
    <property type="evidence" value="ECO:0007669"/>
    <property type="project" value="UniProtKB-UniRule"/>
</dbReference>
<dbReference type="GO" id="GO:0005506">
    <property type="term" value="F:iron ion binding"/>
    <property type="evidence" value="ECO:0007669"/>
    <property type="project" value="UniProtKB-UniRule"/>
</dbReference>
<dbReference type="GO" id="GO:0009102">
    <property type="term" value="P:biotin biosynthetic process"/>
    <property type="evidence" value="ECO:0007669"/>
    <property type="project" value="UniProtKB-UniRule"/>
</dbReference>
<dbReference type="CDD" id="cd01335">
    <property type="entry name" value="Radical_SAM"/>
    <property type="match status" value="1"/>
</dbReference>
<dbReference type="FunFam" id="3.20.20.70:FF:000011">
    <property type="entry name" value="Biotin synthase"/>
    <property type="match status" value="1"/>
</dbReference>
<dbReference type="Gene3D" id="3.20.20.70">
    <property type="entry name" value="Aldolase class I"/>
    <property type="match status" value="1"/>
</dbReference>
<dbReference type="HAMAP" id="MF_01694">
    <property type="entry name" value="BioB"/>
    <property type="match status" value="1"/>
</dbReference>
<dbReference type="InterPro" id="IPR013785">
    <property type="entry name" value="Aldolase_TIM"/>
</dbReference>
<dbReference type="InterPro" id="IPR010722">
    <property type="entry name" value="BATS_dom"/>
</dbReference>
<dbReference type="InterPro" id="IPR002684">
    <property type="entry name" value="Biotin_synth/BioAB"/>
</dbReference>
<dbReference type="InterPro" id="IPR024177">
    <property type="entry name" value="Biotin_synthase"/>
</dbReference>
<dbReference type="InterPro" id="IPR006638">
    <property type="entry name" value="Elp3/MiaA/NifB-like_rSAM"/>
</dbReference>
<dbReference type="InterPro" id="IPR007197">
    <property type="entry name" value="rSAM"/>
</dbReference>
<dbReference type="NCBIfam" id="TIGR00433">
    <property type="entry name" value="bioB"/>
    <property type="match status" value="1"/>
</dbReference>
<dbReference type="PANTHER" id="PTHR22976">
    <property type="entry name" value="BIOTIN SYNTHASE"/>
    <property type="match status" value="1"/>
</dbReference>
<dbReference type="PANTHER" id="PTHR22976:SF2">
    <property type="entry name" value="BIOTIN SYNTHASE, MITOCHONDRIAL"/>
    <property type="match status" value="1"/>
</dbReference>
<dbReference type="Pfam" id="PF06968">
    <property type="entry name" value="BATS"/>
    <property type="match status" value="1"/>
</dbReference>
<dbReference type="Pfam" id="PF04055">
    <property type="entry name" value="Radical_SAM"/>
    <property type="match status" value="1"/>
</dbReference>
<dbReference type="PIRSF" id="PIRSF001619">
    <property type="entry name" value="Biotin_synth"/>
    <property type="match status" value="1"/>
</dbReference>
<dbReference type="SFLD" id="SFLDF00272">
    <property type="entry name" value="biotin_synthase"/>
    <property type="match status" value="1"/>
</dbReference>
<dbReference type="SFLD" id="SFLDS00029">
    <property type="entry name" value="Radical_SAM"/>
    <property type="match status" value="1"/>
</dbReference>
<dbReference type="SMART" id="SM00876">
    <property type="entry name" value="BATS"/>
    <property type="match status" value="1"/>
</dbReference>
<dbReference type="SMART" id="SM00729">
    <property type="entry name" value="Elp3"/>
    <property type="match status" value="1"/>
</dbReference>
<dbReference type="SUPFAM" id="SSF102114">
    <property type="entry name" value="Radical SAM enzymes"/>
    <property type="match status" value="1"/>
</dbReference>
<dbReference type="PROSITE" id="PS51918">
    <property type="entry name" value="RADICAL_SAM"/>
    <property type="match status" value="1"/>
</dbReference>
<sequence length="346" mass="38649">MAHRPRWTLSQVTELFEKPLLDLLFEAQQVHRQHFDPRQVQVSTLLSIKTGACPEDCKYCPQSSRYKTGLEAERLMEVEQVLESARKAKAAGSTRFCMGAAWKNPHERDMPYLEQMVQGVKAMGLEACMTLGTLSESQAQRLANAGLDYYNHNLDTSPEFYGNIITTRTYQERLDTLEKVRDAGIKVCSGGIVGLGETVKDRAGLLLQLANLPTPPESVPINMLVKVEGTPLADNDDVDAFDFIRTIAVARIMMPTSYVRLSAGREQMNEQTQAMCFMAGANSIFYGCKLLTTPNPEEDKDLQLFRKLGLNPQQTAVLAGDNEQQQRLEQALMTPDTDEYYNAAAL</sequence>
<gene>
    <name evidence="1" type="primary">bioB</name>
    <name type="ordered locus">ECSE_0828</name>
</gene>
<proteinExistence type="inferred from homology"/>
<keyword id="KW-0001">2Fe-2S</keyword>
<keyword id="KW-0004">4Fe-4S</keyword>
<keyword id="KW-0093">Biotin biosynthesis</keyword>
<keyword id="KW-0408">Iron</keyword>
<keyword id="KW-0411">Iron-sulfur</keyword>
<keyword id="KW-0479">Metal-binding</keyword>
<keyword id="KW-0949">S-adenosyl-L-methionine</keyword>
<keyword id="KW-0808">Transferase</keyword>
<name>BIOB_ECOSE</name>
<comment type="function">
    <text evidence="1">Catalyzes the conversion of dethiobiotin (DTB) to biotin by the insertion of a sulfur atom into dethiobiotin via a radical-based mechanism.</text>
</comment>
<comment type="catalytic activity">
    <reaction evidence="1">
        <text>(4R,5S)-dethiobiotin + (sulfur carrier)-SH + 2 reduced [2Fe-2S]-[ferredoxin] + 2 S-adenosyl-L-methionine = (sulfur carrier)-H + biotin + 2 5'-deoxyadenosine + 2 L-methionine + 2 oxidized [2Fe-2S]-[ferredoxin]</text>
        <dbReference type="Rhea" id="RHEA:22060"/>
        <dbReference type="Rhea" id="RHEA-COMP:10000"/>
        <dbReference type="Rhea" id="RHEA-COMP:10001"/>
        <dbReference type="Rhea" id="RHEA-COMP:14737"/>
        <dbReference type="Rhea" id="RHEA-COMP:14739"/>
        <dbReference type="ChEBI" id="CHEBI:17319"/>
        <dbReference type="ChEBI" id="CHEBI:29917"/>
        <dbReference type="ChEBI" id="CHEBI:33737"/>
        <dbReference type="ChEBI" id="CHEBI:33738"/>
        <dbReference type="ChEBI" id="CHEBI:57586"/>
        <dbReference type="ChEBI" id="CHEBI:57844"/>
        <dbReference type="ChEBI" id="CHEBI:59789"/>
        <dbReference type="ChEBI" id="CHEBI:64428"/>
        <dbReference type="ChEBI" id="CHEBI:149473"/>
        <dbReference type="EC" id="2.8.1.6"/>
    </reaction>
</comment>
<comment type="cofactor">
    <cofactor evidence="1">
        <name>[4Fe-4S] cluster</name>
        <dbReference type="ChEBI" id="CHEBI:49883"/>
    </cofactor>
    <text evidence="1">Binds 1 [4Fe-4S] cluster. The cluster is coordinated with 3 cysteines and an exchangeable S-adenosyl-L-methionine.</text>
</comment>
<comment type="cofactor">
    <cofactor evidence="1">
        <name>[2Fe-2S] cluster</name>
        <dbReference type="ChEBI" id="CHEBI:190135"/>
    </cofactor>
    <text evidence="1">Binds 1 [2Fe-2S] cluster. The cluster is coordinated with 3 cysteines and 1 arginine.</text>
</comment>
<comment type="pathway">
    <text evidence="1">Cofactor biosynthesis; biotin biosynthesis; biotin from 7,8-diaminononanoate: step 2/2.</text>
</comment>
<comment type="subunit">
    <text evidence="1">Homodimer.</text>
</comment>
<comment type="similarity">
    <text evidence="1">Belongs to the radical SAM superfamily. Biotin synthase family.</text>
</comment>
<organism>
    <name type="scientific">Escherichia coli (strain SE11)</name>
    <dbReference type="NCBI Taxonomy" id="409438"/>
    <lineage>
        <taxon>Bacteria</taxon>
        <taxon>Pseudomonadati</taxon>
        <taxon>Pseudomonadota</taxon>
        <taxon>Gammaproteobacteria</taxon>
        <taxon>Enterobacterales</taxon>
        <taxon>Enterobacteriaceae</taxon>
        <taxon>Escherichia</taxon>
    </lineage>
</organism>
<protein>
    <recommendedName>
        <fullName evidence="1">Biotin synthase</fullName>
        <ecNumber evidence="1">2.8.1.6</ecNumber>
    </recommendedName>
</protein>